<comment type="function">
    <text evidence="1 2">Lysosomal dipeptide uniporter that selectively exports lysine, arginine or histidine-containing dipeptides with a net positive charge from the lysosome lumen into the cytosol. Could play a role in a specific type of protein O-glycosylation indirectly regulating macrophages migration and tissue invasion (By similarity). Also essential for liver homeostasis (By similarity).</text>
</comment>
<comment type="catalytic activity">
    <reaction evidence="2">
        <text>L-alpha-aminoacyl-L-arginine(out) = L-alpha-aminoacyl-L-arginine(in)</text>
        <dbReference type="Rhea" id="RHEA:79367"/>
        <dbReference type="ChEBI" id="CHEBI:229968"/>
    </reaction>
</comment>
<comment type="catalytic activity">
    <reaction evidence="2">
        <text>L-arginyl-L-alpha-amino acid(out) = L-arginyl-L-alpha-amino acid(in)</text>
        <dbReference type="Rhea" id="RHEA:79371"/>
        <dbReference type="ChEBI" id="CHEBI:84315"/>
    </reaction>
</comment>
<comment type="catalytic activity">
    <reaction evidence="2">
        <text>L-arginyl-glycine(out) = L-arginyl-glycine(in)</text>
        <dbReference type="Rhea" id="RHEA:79391"/>
        <dbReference type="ChEBI" id="CHEBI:229955"/>
    </reaction>
</comment>
<comment type="catalytic activity">
    <reaction evidence="2">
        <text>L-alpha-aminoacyl-L-lysine(out) = L-alpha-aminoacyl-L-lysine(in)</text>
        <dbReference type="Rhea" id="RHEA:79383"/>
        <dbReference type="ChEBI" id="CHEBI:229966"/>
    </reaction>
</comment>
<comment type="catalytic activity">
    <reaction evidence="2">
        <text>L-aspartyl-L-lysine(out) = L-aspartyl-L-lysine(in)</text>
        <dbReference type="Rhea" id="RHEA:79411"/>
        <dbReference type="ChEBI" id="CHEBI:229953"/>
    </reaction>
</comment>
<comment type="catalytic activity">
    <reaction evidence="2">
        <text>L-alanyl-L-lysine(out) = L-alanyl-L-lysine(in)</text>
        <dbReference type="Rhea" id="RHEA:79415"/>
        <dbReference type="ChEBI" id="CHEBI:192470"/>
    </reaction>
</comment>
<comment type="catalytic activity">
    <reaction evidence="2">
        <text>L-lysyl-L-alpha-amino acid(out) = L-lysyl-L-alpha-amino acid(in)</text>
        <dbReference type="Rhea" id="RHEA:79387"/>
        <dbReference type="ChEBI" id="CHEBI:229965"/>
    </reaction>
</comment>
<comment type="catalytic activity">
    <reaction evidence="2">
        <text>L-lysyl-L-alanine(out) = L-lysyl-L-alanine(in)</text>
        <dbReference type="Rhea" id="RHEA:79399"/>
        <dbReference type="ChEBI" id="CHEBI:229954"/>
    </reaction>
</comment>
<comment type="catalytic activity">
    <reaction evidence="2">
        <text>L-lysyl-L-lysine(out) = L-lysyl-L-lysine(in)</text>
        <dbReference type="Rhea" id="RHEA:79403"/>
        <dbReference type="ChEBI" id="CHEBI:229956"/>
    </reaction>
</comment>
<comment type="catalytic activity">
    <reaction evidence="2">
        <text>L-lysyl-glycine(out) = L-lysyl-glycine(in)</text>
        <dbReference type="Rhea" id="RHEA:79407"/>
        <dbReference type="ChEBI" id="CHEBI:191202"/>
    </reaction>
</comment>
<comment type="catalytic activity">
    <reaction evidence="2">
        <text>L-alpha-aminoacyl-L-histidine(out) = L-alpha-aminoacyl-L-histidine(in)</text>
        <dbReference type="Rhea" id="RHEA:79375"/>
        <dbReference type="ChEBI" id="CHEBI:229967"/>
    </reaction>
</comment>
<comment type="catalytic activity">
    <reaction evidence="2">
        <text>L-histidyl-L-alpha-amino acid(out) = L-histidyl-L-alpha-amino acid(in)</text>
        <dbReference type="Rhea" id="RHEA:79379"/>
        <dbReference type="ChEBI" id="CHEBI:229964"/>
    </reaction>
</comment>
<comment type="catalytic activity">
    <reaction evidence="2">
        <text>L-histidyl-glycine(out) = L-histidyl-glycine(in)</text>
        <dbReference type="Rhea" id="RHEA:79395"/>
        <dbReference type="ChEBI" id="CHEBI:229957"/>
    </reaction>
</comment>
<comment type="subunit">
    <text evidence="1">Homodimer. Interacts with lysosomal protein GLMP (via lumenal domain); the interaction starts while both proteins are still in the endoplasmic reticulum and is required for stabilization of MFSD1 in lysosomes but has no direct effect on its targeting to lysosomes or transporter activity.</text>
</comment>
<comment type="subcellular location">
    <subcellularLocation>
        <location evidence="1">Lysosome membrane</location>
        <topology evidence="3">Multi-pass membrane protein</topology>
    </subcellularLocation>
</comment>
<comment type="domain">
    <text evidence="1">The dileucine internalization motif is required for lysosomal localization.</text>
</comment>
<comment type="similarity">
    <text evidence="4">Belongs to the major facilitator superfamily.</text>
</comment>
<accession>Q5ZIT9</accession>
<reference key="1">
    <citation type="journal article" date="2005" name="Genome Biol.">
        <title>Full-length cDNAs from chicken bursal lymphocytes to facilitate gene function analysis.</title>
        <authorList>
            <person name="Caldwell R.B."/>
            <person name="Kierzek A.M."/>
            <person name="Arakawa H."/>
            <person name="Bezzubov Y."/>
            <person name="Zaim J."/>
            <person name="Fiedler P."/>
            <person name="Kutter S."/>
            <person name="Blagodatski A."/>
            <person name="Kostovska D."/>
            <person name="Koter M."/>
            <person name="Plachy J."/>
            <person name="Carninci P."/>
            <person name="Hayashizaki Y."/>
            <person name="Buerstedde J.-M."/>
        </authorList>
    </citation>
    <scope>NUCLEOTIDE SEQUENCE [LARGE SCALE MRNA]</scope>
    <source>
        <strain>CB</strain>
        <tissue>Bursa of Fabricius</tissue>
    </source>
</reference>
<keyword id="KW-0458">Lysosome</keyword>
<keyword id="KW-0472">Membrane</keyword>
<keyword id="KW-1185">Reference proteome</keyword>
<keyword id="KW-0812">Transmembrane</keyword>
<keyword id="KW-1133">Transmembrane helix</keyword>
<keyword id="KW-0813">Transport</keyword>
<sequence length="442" mass="48162">MAEEERALLGPDGGDGGSAAPPRALPAVCDPSRLPHRLLVLALMCFLGFGSCFCYDNPAALQTQVQGDMKVNTARFMALYAWLGTVIFSIFVCVGQVIFALGALVNAFWLMEVGRFIFGIGGESLAVAQNTYAVSWFKGKELNLVFGLQLSMARIGSTVNMNIMGWIYSRVQDLLGHTGHATLGLTLLIGGITCLFSLACALILAYLDKRAEKLLCKEQGKTGEVIKLTDVKNFSLSLWLIFVICVCYYAAVFPFIGLGKVFFIEKFQFSSQEASAINSVVYIISAPMSPVFGILVDKVGKNIIWVLCAVITTLASHIMLAFTFWNPWIAMCLLGVAYSLLACALWPMVAFVVPEHQLGTAYGFMQSIQNLGLAVIAIAAGMILDTRGYLFLEVFFSACVSLSLVAVVMLYFVNHLTGGDLNWSAKKREKLQKVAANDLLYC</sequence>
<proteinExistence type="evidence at transcript level"/>
<organism>
    <name type="scientific">Gallus gallus</name>
    <name type="common">Chicken</name>
    <dbReference type="NCBI Taxonomy" id="9031"/>
    <lineage>
        <taxon>Eukaryota</taxon>
        <taxon>Metazoa</taxon>
        <taxon>Chordata</taxon>
        <taxon>Craniata</taxon>
        <taxon>Vertebrata</taxon>
        <taxon>Euteleostomi</taxon>
        <taxon>Archelosauria</taxon>
        <taxon>Archosauria</taxon>
        <taxon>Dinosauria</taxon>
        <taxon>Saurischia</taxon>
        <taxon>Theropoda</taxon>
        <taxon>Coelurosauria</taxon>
        <taxon>Aves</taxon>
        <taxon>Neognathae</taxon>
        <taxon>Galloanserae</taxon>
        <taxon>Galliformes</taxon>
        <taxon>Phasianidae</taxon>
        <taxon>Phasianinae</taxon>
        <taxon>Gallus</taxon>
    </lineage>
</organism>
<feature type="chain" id="PRO_0000273385" description="Lysosomal dipeptide transporter MFSD1">
    <location>
        <begin position="1"/>
        <end position="442"/>
    </location>
</feature>
<feature type="transmembrane region" description="Helical" evidence="3">
    <location>
        <begin position="38"/>
        <end position="58"/>
    </location>
</feature>
<feature type="transmembrane region" description="Helical" evidence="3">
    <location>
        <begin position="85"/>
        <end position="105"/>
    </location>
</feature>
<feature type="transmembrane region" description="Helical" evidence="3">
    <location>
        <begin position="107"/>
        <end position="127"/>
    </location>
</feature>
<feature type="transmembrane region" description="Helical" evidence="3">
    <location>
        <begin position="187"/>
        <end position="207"/>
    </location>
</feature>
<feature type="transmembrane region" description="Helical" evidence="3">
    <location>
        <begin position="238"/>
        <end position="258"/>
    </location>
</feature>
<feature type="transmembrane region" description="Helical" evidence="3">
    <location>
        <begin position="276"/>
        <end position="296"/>
    </location>
</feature>
<feature type="transmembrane region" description="Helical" evidence="3">
    <location>
        <begin position="303"/>
        <end position="323"/>
    </location>
</feature>
<feature type="transmembrane region" description="Helical" evidence="3">
    <location>
        <begin position="333"/>
        <end position="353"/>
    </location>
</feature>
<feature type="transmembrane region" description="Helical" evidence="3">
    <location>
        <begin position="364"/>
        <end position="384"/>
    </location>
</feature>
<feature type="transmembrane region" description="Helical" evidence="3">
    <location>
        <begin position="390"/>
        <end position="410"/>
    </location>
</feature>
<feature type="short sequence motif" description="Dileucine internalization motif" evidence="1">
    <location>
        <begin position="8"/>
        <end position="9"/>
    </location>
</feature>
<name>MFSD1_CHICK</name>
<dbReference type="EMBL" id="AJ720695">
    <property type="protein sequence ID" value="CAG32354.1"/>
    <property type="molecule type" value="mRNA"/>
</dbReference>
<dbReference type="RefSeq" id="NP_001026492.1">
    <property type="nucleotide sequence ID" value="NM_001031321.1"/>
</dbReference>
<dbReference type="SMR" id="Q5ZIT9"/>
<dbReference type="FunCoup" id="Q5ZIT9">
    <property type="interactions" value="1451"/>
</dbReference>
<dbReference type="STRING" id="9031.ENSGALP00000015616"/>
<dbReference type="PaxDb" id="9031-ENSGALP00000015616"/>
<dbReference type="GeneID" id="425017"/>
<dbReference type="KEGG" id="gga:425017"/>
<dbReference type="CTD" id="64747"/>
<dbReference type="VEuPathDB" id="HostDB:geneid_425017"/>
<dbReference type="eggNOG" id="KOG4686">
    <property type="taxonomic scope" value="Eukaryota"/>
</dbReference>
<dbReference type="InParanoid" id="Q5ZIT9"/>
<dbReference type="OrthoDB" id="424834at2759"/>
<dbReference type="PhylomeDB" id="Q5ZIT9"/>
<dbReference type="PRO" id="PR:Q5ZIT9"/>
<dbReference type="Proteomes" id="UP000000539">
    <property type="component" value="Chromosome 9"/>
</dbReference>
<dbReference type="Bgee" id="ENSGALG00000009593">
    <property type="expression patterns" value="Expressed in spermatocyte and 14 other cell types or tissues"/>
</dbReference>
<dbReference type="GO" id="GO:0005765">
    <property type="term" value="C:lysosomal membrane"/>
    <property type="evidence" value="ECO:0000250"/>
    <property type="project" value="UniProtKB"/>
</dbReference>
<dbReference type="GO" id="GO:0005764">
    <property type="term" value="C:lysosome"/>
    <property type="evidence" value="ECO:0000250"/>
    <property type="project" value="UniProtKB"/>
</dbReference>
<dbReference type="GO" id="GO:0160178">
    <property type="term" value="F:dipeptide uniporter activity"/>
    <property type="evidence" value="ECO:0000250"/>
    <property type="project" value="UniProtKB"/>
</dbReference>
<dbReference type="GO" id="GO:0042803">
    <property type="term" value="F:protein homodimerization activity"/>
    <property type="evidence" value="ECO:0000250"/>
    <property type="project" value="UniProtKB"/>
</dbReference>
<dbReference type="GO" id="GO:0141204">
    <property type="term" value="P:dipeptide transmembrane transport from lysosomal lumen to cytosol"/>
    <property type="evidence" value="ECO:0000250"/>
    <property type="project" value="UniProtKB"/>
</dbReference>
<dbReference type="GO" id="GO:0061462">
    <property type="term" value="P:protein localization to lysosome"/>
    <property type="evidence" value="ECO:0000250"/>
    <property type="project" value="UniProtKB"/>
</dbReference>
<dbReference type="GO" id="GO:0050821">
    <property type="term" value="P:protein stabilization"/>
    <property type="evidence" value="ECO:0000250"/>
    <property type="project" value="UniProtKB"/>
</dbReference>
<dbReference type="CDD" id="cd17340">
    <property type="entry name" value="MFS_MFSD1"/>
    <property type="match status" value="1"/>
</dbReference>
<dbReference type="Gene3D" id="1.20.1250.20">
    <property type="entry name" value="MFS general substrate transporter like domains"/>
    <property type="match status" value="2"/>
</dbReference>
<dbReference type="InterPro" id="IPR011701">
    <property type="entry name" value="MFS"/>
</dbReference>
<dbReference type="InterPro" id="IPR036259">
    <property type="entry name" value="MFS_trans_sf"/>
</dbReference>
<dbReference type="InterPro" id="IPR052187">
    <property type="entry name" value="MFSD1"/>
</dbReference>
<dbReference type="PANTHER" id="PTHR23512">
    <property type="entry name" value="MAJOR FACILITATOR SUPERFAMILY DOMAIN-CONTAINING PROTEIN 1"/>
    <property type="match status" value="1"/>
</dbReference>
<dbReference type="PANTHER" id="PTHR23512:SF3">
    <property type="entry name" value="MAJOR FACILITATOR SUPERFAMILY DOMAIN-CONTAINING PROTEIN 1"/>
    <property type="match status" value="1"/>
</dbReference>
<dbReference type="Pfam" id="PF07690">
    <property type="entry name" value="MFS_1"/>
    <property type="match status" value="1"/>
</dbReference>
<dbReference type="SUPFAM" id="SSF103473">
    <property type="entry name" value="MFS general substrate transporter"/>
    <property type="match status" value="1"/>
</dbReference>
<evidence type="ECO:0000250" key="1">
    <source>
        <dbReference type="UniProtKB" id="Q9DC37"/>
    </source>
</evidence>
<evidence type="ECO:0000250" key="2">
    <source>
        <dbReference type="UniProtKB" id="Q9H3U5"/>
    </source>
</evidence>
<evidence type="ECO:0000255" key="3"/>
<evidence type="ECO:0000305" key="4"/>
<gene>
    <name evidence="2" type="primary">MFSD1</name>
    <name type="ORF">RCJMB04_23j9</name>
</gene>
<protein>
    <recommendedName>
        <fullName evidence="2">Lysosomal dipeptide transporter MFSD1</fullName>
    </recommendedName>
    <alternativeName>
        <fullName evidence="2">Major facilitator superfamily domain-containing protein 1</fullName>
    </alternativeName>
</protein>